<sequence>MGAMMVMMGLLLIIVSLCSALLRWNQMRYTKNGLPPGTMGWPIFGETTEFLKQGPNFMRNQRLRYGSFFKSHLLGCPTLISMDSEVNRYILKNESKGLVPGYPQSMLDILGTCNMAAVHGSSHRLMRGSLLSLISSTMMRDHILPKVDHFMRSYLDQWNELEVIDIQDKTKHMAFLSSLTQIAGNLRKPFVEEFKTAFFKLVVGTLSVPIDLPGTNYRCGIQARNNIDRLLRELMQERRDSGETFTDMLGYLMKKEGNRYPLTDEEIRDQVVTILYSGYETVSTTSMMALKYLHDHPKALQELRAEHLAFRERKRQDEPLGLEDVKSMKFTRAVIYETSRLATIVNGVLRKTTRDLEINGYLIPKGWRIYVYTREINYDANLYEDPLIFNPWRWMKKSLESQNSCFVFGGGTRLCPGKELGIVEISSFLHYFVTRYRWEEIGGDELMVFPRVFAPKGFHLRISPY</sequence>
<reference key="1">
    <citation type="journal article" date="2001" name="Plant Physiol.">
        <title>Brassinosteroid-6-oxidases from Arabidopsis and tomato catalyze multiple C-6 oxidations in brassinosteroid biosynthesis.</title>
        <authorList>
            <person name="Shimada Y."/>
            <person name="Fujioka S."/>
            <person name="Miyauchi N."/>
            <person name="Kushiro M."/>
            <person name="Takatsuto S."/>
            <person name="Nomura T."/>
            <person name="Yokota T."/>
            <person name="Kamiya Y."/>
            <person name="Bishop G.J."/>
            <person name="Yoshida S."/>
        </authorList>
    </citation>
    <scope>NUCLEOTIDE SEQUENCE [MRNA] (ISOFORM 1)</scope>
    <scope>FUNCTION</scope>
    <scope>CATALYTIC ACTIVITY</scope>
    <scope>PATHWAY</scope>
</reference>
<reference key="2">
    <citation type="journal article" date="1998" name="DNA Res.">
        <title>Structural analysis of Arabidopsis thaliana chromosome 5. IV. Sequence features of the regions of 1,456,315 bp covered by nineteen physically assigned P1 and TAC clones.</title>
        <authorList>
            <person name="Sato S."/>
            <person name="Kaneko T."/>
            <person name="Kotani H."/>
            <person name="Nakamura Y."/>
            <person name="Asamizu E."/>
            <person name="Miyajima N."/>
            <person name="Tabata S."/>
        </authorList>
    </citation>
    <scope>NUCLEOTIDE SEQUENCE [LARGE SCALE GENOMIC DNA]</scope>
    <source>
        <strain>cv. Columbia</strain>
    </source>
</reference>
<reference key="3">
    <citation type="journal article" date="2017" name="Plant J.">
        <title>Araport11: a complete reannotation of the Arabidopsis thaliana reference genome.</title>
        <authorList>
            <person name="Cheng C.Y."/>
            <person name="Krishnakumar V."/>
            <person name="Chan A.P."/>
            <person name="Thibaud-Nissen F."/>
            <person name="Schobel S."/>
            <person name="Town C.D."/>
        </authorList>
    </citation>
    <scope>GENOME REANNOTATION</scope>
    <source>
        <strain>cv. Columbia</strain>
    </source>
</reference>
<reference key="4">
    <citation type="journal article" date="2002" name="Plant Physiol.">
        <title>Microarray analysis of brassinosteroid-regulated genes in Arabidopsis.</title>
        <authorList>
            <person name="Goda H."/>
            <person name="Shimada Y."/>
            <person name="Asami T."/>
            <person name="Fujioka S."/>
            <person name="Yoshida S."/>
        </authorList>
    </citation>
    <scope>INDUCTION</scope>
</reference>
<reference key="5">
    <citation type="journal article" date="2003" name="Plant Physiol.">
        <title>Organ-specific expression of brassinosteroid-biosynthetic genes and distribution of endogenous brassinosteroids in Arabidopsis.</title>
        <authorList>
            <person name="Shimada Y."/>
            <person name="Goda H."/>
            <person name="Nakamura A."/>
            <person name="Takatsuto S."/>
            <person name="Fujioka S."/>
            <person name="Yoshida S."/>
        </authorList>
    </citation>
    <scope>FUNCTION</scope>
    <scope>TISSUE SPECIFICITY</scope>
</reference>
<reference key="6">
    <citation type="journal article" date="2005" name="Plant Cell">
        <title>Arabidopsis CYP85A2, a cytochrome P450, mediates the Baeyer-Villiger oxidation of castasterone to brassinolide in brassinosteroid biosynthesis.</title>
        <authorList>
            <person name="Kim T.-W."/>
            <person name="Hwang J.-Y."/>
            <person name="Kim Y.-S."/>
            <person name="Joo S.-H."/>
            <person name="Chang S.C."/>
            <person name="Lee J.S."/>
            <person name="Takatsuto S."/>
            <person name="Kim S.-K."/>
        </authorList>
    </citation>
    <scope>FUNCTION</scope>
    <scope>CATALYTIC ACTIVITY</scope>
    <scope>PATHWAY</scope>
</reference>
<reference key="7">
    <citation type="journal article" date="2011" name="Plant Signal. Behav.">
        <title>CYP85A1 is required for the initiation of female gametogenesis in Arabidopsis thaliana.</title>
        <authorList>
            <person name="Perez-Espana V.H."/>
            <person name="Sanchez-Leon N."/>
            <person name="Vielle-Calzada J.-P."/>
        </authorList>
    </citation>
    <scope>FUNCTION</scope>
    <scope>DISRUPTION PHENOTYPE</scope>
    <scope>DEVELOPMENTAL STAGE</scope>
    <scope>TISSUE SPECIFICITY</scope>
    <source>
        <strain>cv. Columbia</strain>
        <strain>cv. Landsberg erecta</strain>
    </source>
</reference>
<reference key="8">
    <citation type="journal article" date="2020" name="Plant Cell Physiol.">
        <title>Light activates brassinosteroid biosynthesis to promote hook opening and petiole development in Arabidopsis thaliana.</title>
        <authorList>
            <person name="Hamasaki H."/>
            <person name="Ayano M."/>
            <person name="Nakamura A."/>
            <person name="Fujioka S."/>
            <person name="Asami T."/>
            <person name="Takatsuto S."/>
            <person name="Yoshida S."/>
            <person name="Oka Y."/>
            <person name="Matsui M."/>
            <person name="Shimada Y."/>
        </authorList>
    </citation>
    <scope>TISSUE SPECIFICITY</scope>
    <scope>INDUCTION BY LIGHT</scope>
</reference>
<dbReference type="EC" id="1.14.14.179" evidence="3 6"/>
<dbReference type="EMBL" id="AB035868">
    <property type="protein sequence ID" value="BAB60858.1"/>
    <property type="molecule type" value="mRNA"/>
</dbReference>
<dbReference type="EMBL" id="AB009048">
    <property type="protein sequence ID" value="BAB08653.1"/>
    <property type="molecule type" value="Genomic_DNA"/>
</dbReference>
<dbReference type="EMBL" id="CP002688">
    <property type="protein sequence ID" value="AED94380.1"/>
    <property type="molecule type" value="Genomic_DNA"/>
</dbReference>
<dbReference type="EMBL" id="CP002688">
    <property type="protein sequence ID" value="AED94381.1"/>
    <property type="molecule type" value="Genomic_DNA"/>
</dbReference>
<dbReference type="EMBL" id="CP002688">
    <property type="protein sequence ID" value="AED94382.1"/>
    <property type="molecule type" value="Genomic_DNA"/>
</dbReference>
<dbReference type="EMBL" id="CP002688">
    <property type="protein sequence ID" value="ANM70769.1"/>
    <property type="molecule type" value="Genomic_DNA"/>
</dbReference>
<dbReference type="RefSeq" id="NP_001332353.1">
    <molecule id="Q9FMA5-2"/>
    <property type="nucleotide sequence ID" value="NM_001344281.1"/>
</dbReference>
<dbReference type="RefSeq" id="NP_198713.3">
    <molecule id="Q9FMA5-2"/>
    <property type="nucleotide sequence ID" value="NM_123259.4"/>
</dbReference>
<dbReference type="RefSeq" id="NP_851105.1">
    <molecule id="Q9FMA5-1"/>
    <property type="nucleotide sequence ID" value="NM_180774.2"/>
</dbReference>
<dbReference type="RefSeq" id="NP_974862.1">
    <molecule id="Q9FMA5-3"/>
    <property type="nucleotide sequence ID" value="NM_203133.2"/>
</dbReference>
<dbReference type="SMR" id="Q9FMA5"/>
<dbReference type="BioGRID" id="19140">
    <property type="interactions" value="15"/>
</dbReference>
<dbReference type="FunCoup" id="Q9FMA5">
    <property type="interactions" value="214"/>
</dbReference>
<dbReference type="IntAct" id="Q9FMA5">
    <property type="interactions" value="14"/>
</dbReference>
<dbReference type="STRING" id="3702.Q9FMA5"/>
<dbReference type="PaxDb" id="3702-AT5G38970.1"/>
<dbReference type="EnsemblPlants" id="AT5G38970.1">
    <molecule id="Q9FMA5-1"/>
    <property type="protein sequence ID" value="AT5G38970.1"/>
    <property type="gene ID" value="AT5G38970"/>
</dbReference>
<dbReference type="EnsemblPlants" id="AT5G38970.2">
    <molecule id="Q9FMA5-2"/>
    <property type="protein sequence ID" value="AT5G38970.2"/>
    <property type="gene ID" value="AT5G38970"/>
</dbReference>
<dbReference type="EnsemblPlants" id="AT5G38970.3">
    <molecule id="Q9FMA5-3"/>
    <property type="protein sequence ID" value="AT5G38970.3"/>
    <property type="gene ID" value="AT5G38970"/>
</dbReference>
<dbReference type="EnsemblPlants" id="AT5G38970.4">
    <molecule id="Q9FMA5-2"/>
    <property type="protein sequence ID" value="AT5G38970.4"/>
    <property type="gene ID" value="AT5G38970"/>
</dbReference>
<dbReference type="GeneID" id="833889"/>
<dbReference type="Gramene" id="AT5G38970.1">
    <molecule id="Q9FMA5-1"/>
    <property type="protein sequence ID" value="AT5G38970.1"/>
    <property type="gene ID" value="AT5G38970"/>
</dbReference>
<dbReference type="Gramene" id="AT5G38970.2">
    <molecule id="Q9FMA5-2"/>
    <property type="protein sequence ID" value="AT5G38970.2"/>
    <property type="gene ID" value="AT5G38970"/>
</dbReference>
<dbReference type="Gramene" id="AT5G38970.3">
    <molecule id="Q9FMA5-3"/>
    <property type="protein sequence ID" value="AT5G38970.3"/>
    <property type="gene ID" value="AT5G38970"/>
</dbReference>
<dbReference type="Gramene" id="AT5G38970.4">
    <molecule id="Q9FMA5-2"/>
    <property type="protein sequence ID" value="AT5G38970.4"/>
    <property type="gene ID" value="AT5G38970"/>
</dbReference>
<dbReference type="KEGG" id="ath:AT5G38970"/>
<dbReference type="Araport" id="AT5G38970"/>
<dbReference type="TAIR" id="AT5G38970">
    <property type="gene designation" value="BR6OX1"/>
</dbReference>
<dbReference type="eggNOG" id="KOG0157">
    <property type="taxonomic scope" value="Eukaryota"/>
</dbReference>
<dbReference type="HOGENOM" id="CLU_001570_15_5_1"/>
<dbReference type="InParanoid" id="Q9FMA5"/>
<dbReference type="OMA" id="HIRVTSY"/>
<dbReference type="PhylomeDB" id="Q9FMA5"/>
<dbReference type="BioCyc" id="ARA:AT5G38970-MONOMER"/>
<dbReference type="BioCyc" id="MetaCyc:AT5G38970-MONOMER"/>
<dbReference type="UniPathway" id="UPA00381"/>
<dbReference type="PRO" id="PR:Q9FMA5"/>
<dbReference type="Proteomes" id="UP000006548">
    <property type="component" value="Chromosome 5"/>
</dbReference>
<dbReference type="ExpressionAtlas" id="Q9FMA5">
    <property type="expression patterns" value="baseline and differential"/>
</dbReference>
<dbReference type="GO" id="GO:0016020">
    <property type="term" value="C:membrane"/>
    <property type="evidence" value="ECO:0007669"/>
    <property type="project" value="UniProtKB-SubCell"/>
</dbReference>
<dbReference type="GO" id="GO:0020037">
    <property type="term" value="F:heme binding"/>
    <property type="evidence" value="ECO:0007669"/>
    <property type="project" value="InterPro"/>
</dbReference>
<dbReference type="GO" id="GO:0005506">
    <property type="term" value="F:iron ion binding"/>
    <property type="evidence" value="ECO:0007669"/>
    <property type="project" value="InterPro"/>
</dbReference>
<dbReference type="GO" id="GO:0004497">
    <property type="term" value="F:monooxygenase activity"/>
    <property type="evidence" value="ECO:0000314"/>
    <property type="project" value="TAIR"/>
</dbReference>
<dbReference type="GO" id="GO:0016705">
    <property type="term" value="F:oxidoreductase activity, acting on paired donors, with incorporation or reduction of molecular oxygen"/>
    <property type="evidence" value="ECO:0007669"/>
    <property type="project" value="InterPro"/>
</dbReference>
<dbReference type="GO" id="GO:0016132">
    <property type="term" value="P:brassinosteroid biosynthetic process"/>
    <property type="evidence" value="ECO:0000314"/>
    <property type="project" value="TAIR"/>
</dbReference>
<dbReference type="GO" id="GO:0010268">
    <property type="term" value="P:brassinosteroid homeostasis"/>
    <property type="evidence" value="ECO:0000270"/>
    <property type="project" value="TAIR"/>
</dbReference>
<dbReference type="GO" id="GO:0009561">
    <property type="term" value="P:megagametogenesis"/>
    <property type="evidence" value="ECO:0000315"/>
    <property type="project" value="UniProtKB"/>
</dbReference>
<dbReference type="GO" id="GO:0009416">
    <property type="term" value="P:response to light stimulus"/>
    <property type="evidence" value="ECO:0000270"/>
    <property type="project" value="UniProtKB"/>
</dbReference>
<dbReference type="CDD" id="cd11043">
    <property type="entry name" value="CYP90-like"/>
    <property type="match status" value="1"/>
</dbReference>
<dbReference type="FunFam" id="1.10.630.10:FF:000045">
    <property type="entry name" value="Cytochrome P450 85A1"/>
    <property type="match status" value="1"/>
</dbReference>
<dbReference type="Gene3D" id="1.10.630.10">
    <property type="entry name" value="Cytochrome P450"/>
    <property type="match status" value="1"/>
</dbReference>
<dbReference type="InterPro" id="IPR001128">
    <property type="entry name" value="Cyt_P450"/>
</dbReference>
<dbReference type="InterPro" id="IPR017972">
    <property type="entry name" value="Cyt_P450_CS"/>
</dbReference>
<dbReference type="InterPro" id="IPR002403">
    <property type="entry name" value="Cyt_P450_E_grp-IV"/>
</dbReference>
<dbReference type="InterPro" id="IPR036396">
    <property type="entry name" value="Cyt_P450_sf"/>
</dbReference>
<dbReference type="PANTHER" id="PTHR24286">
    <property type="entry name" value="CYTOCHROME P450 26"/>
    <property type="match status" value="1"/>
</dbReference>
<dbReference type="PANTHER" id="PTHR24286:SF169">
    <property type="entry name" value="CYTOCHROME P450 85A1"/>
    <property type="match status" value="1"/>
</dbReference>
<dbReference type="Pfam" id="PF00067">
    <property type="entry name" value="p450"/>
    <property type="match status" value="1"/>
</dbReference>
<dbReference type="PRINTS" id="PR00465">
    <property type="entry name" value="EP450IV"/>
</dbReference>
<dbReference type="PRINTS" id="PR00385">
    <property type="entry name" value="P450"/>
</dbReference>
<dbReference type="SUPFAM" id="SSF48264">
    <property type="entry name" value="Cytochrome P450"/>
    <property type="match status" value="1"/>
</dbReference>
<dbReference type="PROSITE" id="PS00086">
    <property type="entry name" value="CYTOCHROME_P450"/>
    <property type="match status" value="1"/>
</dbReference>
<feature type="chain" id="PRO_0000052169" description="Cytochrome P450 85A1">
    <location>
        <begin position="1"/>
        <end position="465"/>
    </location>
</feature>
<feature type="transmembrane region" description="Helical" evidence="2">
    <location>
        <begin position="2"/>
        <end position="22"/>
    </location>
</feature>
<feature type="binding site" description="axial binding residue" evidence="1">
    <location>
        <position position="415"/>
    </location>
    <ligand>
        <name>heme</name>
        <dbReference type="ChEBI" id="CHEBI:30413"/>
    </ligand>
    <ligandPart>
        <name>Fe</name>
        <dbReference type="ChEBI" id="CHEBI:18248"/>
    </ligandPart>
</feature>
<feature type="splice variant" id="VSP_014451" description="In isoform 2." evidence="12">
    <location>
        <begin position="1"/>
        <end position="81"/>
    </location>
</feature>
<feature type="splice variant" id="VSP_014452" description="In isoform 3." evidence="12">
    <original>KKSLESQNSCFVFGGGTRLCPGKE</original>
    <variation>VSPWSHKTHALCLEVGQGFVLVRN</variation>
    <location>
        <begin position="396"/>
        <end position="419"/>
    </location>
</feature>
<feature type="splice variant" id="VSP_014453" description="In isoform 3." evidence="12">
    <location>
        <begin position="420"/>
        <end position="465"/>
    </location>
</feature>
<proteinExistence type="evidence at protein level"/>
<comment type="function">
    <text evidence="3 5 6 7">Catalyzes the C6-oxidation step in brassinosteroids biosynthesis (PubMed:11402205, PubMed:12529536, PubMed:16024588). Converts 6-deoxocastasterone (6-deoxoCS) to castasterone (CS) (PubMed:16024588). May also convert 6-deoxoteasterone (6-deoxoTE) to teasterone (TE), 3-dehydro-6-deoxoteasterone (6-deoxo3DT, 6-deoxo-3-DHT) to 3-dehydroteasterone (3DT, 3-DHT), and 6-deoxotyphasterol (6-deoxoTY) to typhasterol (TY) (PubMed:11402205, PubMed:12529536). Required for the initiation of female gametogenesis (megagametogenesis) (PubMed:21364326).</text>
</comment>
<comment type="catalytic activity">
    <reaction evidence="3">
        <text>6-deoxoteasterone + reduced [NADPH--hemoprotein reductase] + O2 = 6alpha-hydroxyteasterone + oxidized [NADPH--hemoprotein reductase] + H2O + H(+)</text>
        <dbReference type="Rhea" id="RHEA:69959"/>
        <dbReference type="Rhea" id="RHEA-COMP:11964"/>
        <dbReference type="Rhea" id="RHEA-COMP:11965"/>
        <dbReference type="ChEBI" id="CHEBI:15377"/>
        <dbReference type="ChEBI" id="CHEBI:15378"/>
        <dbReference type="ChEBI" id="CHEBI:15379"/>
        <dbReference type="ChEBI" id="CHEBI:20716"/>
        <dbReference type="ChEBI" id="CHEBI:57618"/>
        <dbReference type="ChEBI" id="CHEBI:58210"/>
        <dbReference type="ChEBI" id="CHEBI:188499"/>
    </reaction>
    <physiologicalReaction direction="left-to-right" evidence="3">
        <dbReference type="Rhea" id="RHEA:69960"/>
    </physiologicalReaction>
</comment>
<comment type="catalytic activity">
    <reaction evidence="3">
        <text>6alpha-hydroxytyphasterol + reduced [NADPH--hemoprotein reductase] + O2 = teasterone + oxidized [NADPH--hemoprotein reductase] + 2 H2O + H(+)</text>
        <dbReference type="Rhea" id="RHEA:69963"/>
        <dbReference type="Rhea" id="RHEA-COMP:11964"/>
        <dbReference type="Rhea" id="RHEA-COMP:11965"/>
        <dbReference type="ChEBI" id="CHEBI:15377"/>
        <dbReference type="ChEBI" id="CHEBI:15378"/>
        <dbReference type="ChEBI" id="CHEBI:15379"/>
        <dbReference type="ChEBI" id="CHEBI:26863"/>
        <dbReference type="ChEBI" id="CHEBI:57618"/>
        <dbReference type="ChEBI" id="CHEBI:58210"/>
        <dbReference type="ChEBI" id="CHEBI:188495"/>
    </reaction>
    <physiologicalReaction direction="left-to-right" evidence="3">
        <dbReference type="Rhea" id="RHEA:69964"/>
    </physiologicalReaction>
</comment>
<comment type="catalytic activity">
    <reaction evidence="3">
        <text>3-dehydro-6-deoxoteasterone + reduced [NADPH--hemoprotein reductase] + O2 = 3-dehydro-6alpha-hydroxyteasterone + oxidized [NADPH--hemoprotein reductase] + H2O + H(+)</text>
        <dbReference type="Rhea" id="RHEA:69947"/>
        <dbReference type="Rhea" id="RHEA-COMP:11964"/>
        <dbReference type="Rhea" id="RHEA-COMP:11965"/>
        <dbReference type="ChEBI" id="CHEBI:15377"/>
        <dbReference type="ChEBI" id="CHEBI:15378"/>
        <dbReference type="ChEBI" id="CHEBI:15379"/>
        <dbReference type="ChEBI" id="CHEBI:20710"/>
        <dbReference type="ChEBI" id="CHEBI:57618"/>
        <dbReference type="ChEBI" id="CHEBI:58210"/>
        <dbReference type="ChEBI" id="CHEBI:188496"/>
    </reaction>
    <physiologicalReaction direction="left-to-right" evidence="3">
        <dbReference type="Rhea" id="RHEA:69948"/>
    </physiologicalReaction>
</comment>
<comment type="catalytic activity">
    <reaction evidence="3">
        <text>3-dehydro-6alpha-hydroxyteasterone + reduced [NADPH--hemoprotein reductase] + O2 = 3-dehydroteasterone + oxidized [NADPH--hemoprotein reductase] + 2 H2O + H(+)</text>
        <dbReference type="Rhea" id="RHEA:69951"/>
        <dbReference type="Rhea" id="RHEA-COMP:11964"/>
        <dbReference type="Rhea" id="RHEA-COMP:11965"/>
        <dbReference type="ChEBI" id="CHEBI:15377"/>
        <dbReference type="ChEBI" id="CHEBI:15378"/>
        <dbReference type="ChEBI" id="CHEBI:15379"/>
        <dbReference type="ChEBI" id="CHEBI:20000"/>
        <dbReference type="ChEBI" id="CHEBI:57618"/>
        <dbReference type="ChEBI" id="CHEBI:58210"/>
        <dbReference type="ChEBI" id="CHEBI:188496"/>
    </reaction>
    <physiologicalReaction direction="left-to-right" evidence="3">
        <dbReference type="Rhea" id="RHEA:69952"/>
    </physiologicalReaction>
</comment>
<comment type="catalytic activity">
    <reaction evidence="3">
        <text>6-deoxotyphasterol + reduced [NADPH--hemoprotein reductase] + O2 = 6alpha-hydroxytyphasterol + oxidized [NADPH--hemoprotein reductase] + H2O + H(+)</text>
        <dbReference type="Rhea" id="RHEA:69939"/>
        <dbReference type="Rhea" id="RHEA-COMP:11964"/>
        <dbReference type="Rhea" id="RHEA-COMP:11965"/>
        <dbReference type="ChEBI" id="CHEBI:15377"/>
        <dbReference type="ChEBI" id="CHEBI:15378"/>
        <dbReference type="ChEBI" id="CHEBI:15379"/>
        <dbReference type="ChEBI" id="CHEBI:20717"/>
        <dbReference type="ChEBI" id="CHEBI:57618"/>
        <dbReference type="ChEBI" id="CHEBI:58210"/>
        <dbReference type="ChEBI" id="CHEBI:188495"/>
    </reaction>
    <physiologicalReaction direction="left-to-right" evidence="3">
        <dbReference type="Rhea" id="RHEA:69940"/>
    </physiologicalReaction>
</comment>
<comment type="catalytic activity">
    <reaction evidence="3">
        <text>6alpha-hydroxytyphasterol + reduced [NADPH--hemoprotein reductase] + O2 = typhasterol + oxidized [NADPH--hemoprotein reductase] + 2 H2O + H(+)</text>
        <dbReference type="Rhea" id="RHEA:69943"/>
        <dbReference type="Rhea" id="RHEA-COMP:11964"/>
        <dbReference type="Rhea" id="RHEA-COMP:11965"/>
        <dbReference type="ChEBI" id="CHEBI:15377"/>
        <dbReference type="ChEBI" id="CHEBI:15378"/>
        <dbReference type="ChEBI" id="CHEBI:15379"/>
        <dbReference type="ChEBI" id="CHEBI:27173"/>
        <dbReference type="ChEBI" id="CHEBI:57618"/>
        <dbReference type="ChEBI" id="CHEBI:58210"/>
        <dbReference type="ChEBI" id="CHEBI:188495"/>
    </reaction>
    <physiologicalReaction direction="left-to-right" evidence="3">
        <dbReference type="Rhea" id="RHEA:69944"/>
    </physiologicalReaction>
</comment>
<comment type="catalytic activity">
    <reaction evidence="3">
        <text>6-deoxocastasterone + reduced [NADPH--hemoprotein reductase] + O2 = 6alpha-hydroxycastasterone + oxidized [NADPH--hemoprotein reductase] + H2O + H(+)</text>
        <dbReference type="Rhea" id="RHEA:69875"/>
        <dbReference type="Rhea" id="RHEA-COMP:11964"/>
        <dbReference type="Rhea" id="RHEA-COMP:11965"/>
        <dbReference type="ChEBI" id="CHEBI:15377"/>
        <dbReference type="ChEBI" id="CHEBI:15378"/>
        <dbReference type="ChEBI" id="CHEBI:15379"/>
        <dbReference type="ChEBI" id="CHEBI:20712"/>
        <dbReference type="ChEBI" id="CHEBI:20760"/>
        <dbReference type="ChEBI" id="CHEBI:57618"/>
        <dbReference type="ChEBI" id="CHEBI:58210"/>
    </reaction>
    <physiologicalReaction direction="left-to-right" evidence="3">
        <dbReference type="Rhea" id="RHEA:69876"/>
    </physiologicalReaction>
</comment>
<comment type="catalytic activity">
    <reaction evidence="3">
        <text>6alpha-hydroxycastasterone + reduced [NADPH--hemoprotein reductase] + O2 = castasterone + oxidized [NADPH--hemoprotein reductase] + 2 H2O + H(+)</text>
        <dbReference type="Rhea" id="RHEA:69879"/>
        <dbReference type="Rhea" id="RHEA-COMP:11964"/>
        <dbReference type="Rhea" id="RHEA-COMP:11965"/>
        <dbReference type="ChEBI" id="CHEBI:15377"/>
        <dbReference type="ChEBI" id="CHEBI:15378"/>
        <dbReference type="ChEBI" id="CHEBI:15379"/>
        <dbReference type="ChEBI" id="CHEBI:20760"/>
        <dbReference type="ChEBI" id="CHEBI:23051"/>
        <dbReference type="ChEBI" id="CHEBI:57618"/>
        <dbReference type="ChEBI" id="CHEBI:58210"/>
    </reaction>
    <physiologicalReaction direction="left-to-right" evidence="3">
        <dbReference type="Rhea" id="RHEA:69880"/>
    </physiologicalReaction>
</comment>
<comment type="catalytic activity">
    <reaction evidence="3 6">
        <text>6-deoxocastasterone + 2 reduced [NADPH--hemoprotein reductase] + 2 O2 = castasterone + 2 oxidized [NADPH--hemoprotein reductase] + 3 H2O + 2 H(+)</text>
        <dbReference type="Rhea" id="RHEA:70031"/>
        <dbReference type="Rhea" id="RHEA-COMP:11964"/>
        <dbReference type="Rhea" id="RHEA-COMP:11965"/>
        <dbReference type="ChEBI" id="CHEBI:15377"/>
        <dbReference type="ChEBI" id="CHEBI:15378"/>
        <dbReference type="ChEBI" id="CHEBI:15379"/>
        <dbReference type="ChEBI" id="CHEBI:20712"/>
        <dbReference type="ChEBI" id="CHEBI:23051"/>
        <dbReference type="ChEBI" id="CHEBI:57618"/>
        <dbReference type="ChEBI" id="CHEBI:58210"/>
        <dbReference type="EC" id="1.14.14.179"/>
    </reaction>
    <physiologicalReaction direction="left-to-right" evidence="3 6">
        <dbReference type="Rhea" id="RHEA:70032"/>
    </physiologicalReaction>
</comment>
<comment type="catalytic activity">
    <reaction evidence="3">
        <text>6-deoxoteasterone + 2 reduced [NADPH--hemoprotein reductase] + 2 O2 = teasterone + 2 oxidized [NADPH--hemoprotein reductase] + 3 H2O + 2 H(+)</text>
        <dbReference type="Rhea" id="RHEA:70043"/>
        <dbReference type="Rhea" id="RHEA-COMP:11964"/>
        <dbReference type="Rhea" id="RHEA-COMP:11965"/>
        <dbReference type="ChEBI" id="CHEBI:15377"/>
        <dbReference type="ChEBI" id="CHEBI:15378"/>
        <dbReference type="ChEBI" id="CHEBI:15379"/>
        <dbReference type="ChEBI" id="CHEBI:20716"/>
        <dbReference type="ChEBI" id="CHEBI:26863"/>
        <dbReference type="ChEBI" id="CHEBI:57618"/>
        <dbReference type="ChEBI" id="CHEBI:58210"/>
        <dbReference type="EC" id="1.14.14.179"/>
    </reaction>
    <physiologicalReaction direction="left-to-right" evidence="3">
        <dbReference type="Rhea" id="RHEA:70044"/>
    </physiologicalReaction>
</comment>
<comment type="catalytic activity">
    <reaction evidence="3">
        <text>6-deoxotyphasterol + 2 reduced [NADPH--hemoprotein reductase] + 2 O2 = typhasterol + 2 oxidized [NADPH--hemoprotein reductase] + 3 H2O + 2 H(+)</text>
        <dbReference type="Rhea" id="RHEA:70035"/>
        <dbReference type="Rhea" id="RHEA-COMP:11964"/>
        <dbReference type="Rhea" id="RHEA-COMP:11965"/>
        <dbReference type="ChEBI" id="CHEBI:15377"/>
        <dbReference type="ChEBI" id="CHEBI:15378"/>
        <dbReference type="ChEBI" id="CHEBI:15379"/>
        <dbReference type="ChEBI" id="CHEBI:20717"/>
        <dbReference type="ChEBI" id="CHEBI:27173"/>
        <dbReference type="ChEBI" id="CHEBI:57618"/>
        <dbReference type="ChEBI" id="CHEBI:58210"/>
        <dbReference type="EC" id="1.14.14.179"/>
    </reaction>
    <physiologicalReaction direction="left-to-right" evidence="3">
        <dbReference type="Rhea" id="RHEA:70036"/>
    </physiologicalReaction>
</comment>
<comment type="catalytic activity">
    <reaction evidence="3">
        <text>3-dehydro-6-deoxoteasterone + 2 reduced [NADPH--hemoprotein reductase] + 2 O2 = 3-dehydroteasterone + 2 oxidized [NADPH--hemoprotein reductase] + 3 H2O + 2 H(+)</text>
        <dbReference type="Rhea" id="RHEA:70039"/>
        <dbReference type="Rhea" id="RHEA-COMP:11964"/>
        <dbReference type="Rhea" id="RHEA-COMP:11965"/>
        <dbReference type="ChEBI" id="CHEBI:15377"/>
        <dbReference type="ChEBI" id="CHEBI:15378"/>
        <dbReference type="ChEBI" id="CHEBI:15379"/>
        <dbReference type="ChEBI" id="CHEBI:20000"/>
        <dbReference type="ChEBI" id="CHEBI:20710"/>
        <dbReference type="ChEBI" id="CHEBI:57618"/>
        <dbReference type="ChEBI" id="CHEBI:58210"/>
        <dbReference type="EC" id="1.14.14.179"/>
    </reaction>
    <physiologicalReaction direction="left-to-right" evidence="3">
        <dbReference type="Rhea" id="RHEA:70040"/>
    </physiologicalReaction>
</comment>
<comment type="cofactor">
    <cofactor evidence="1">
        <name>heme</name>
        <dbReference type="ChEBI" id="CHEBI:30413"/>
    </cofactor>
</comment>
<comment type="pathway">
    <text evidence="3 6">Plant hormone biosynthesis; brassinosteroid biosynthesis.</text>
</comment>
<comment type="subcellular location">
    <subcellularLocation>
        <location evidence="2">Membrane</location>
        <topology evidence="2">Single-pass membrane protein</topology>
    </subcellularLocation>
</comment>
<comment type="alternative products">
    <event type="alternative splicing"/>
    <isoform>
        <id>Q9FMA5-1</id>
        <name>1</name>
        <sequence type="displayed"/>
    </isoform>
    <isoform>
        <id>Q9FMA5-2</id>
        <name>2</name>
        <sequence type="described" ref="VSP_014451"/>
    </isoform>
    <isoform>
        <id>Q9FMA5-3</id>
        <name>3</name>
        <sequence type="described" ref="VSP_014452 VSP_014453"/>
    </isoform>
</comment>
<comment type="tissue specificity">
    <text evidence="5 7 8">Mainly expressed in apical shoots, hypocotyls, siliques and roots (PubMed:12529536, PubMed:32333772). Also present in the female gametophyte (PubMed:21364326).</text>
</comment>
<comment type="developmental stage">
    <text evidence="7">In the female gametophyte, accumulates in ovules and its neighboring sporophytic cells.</text>
</comment>
<comment type="induction">
    <text evidence="4 8">Repressed by brassinolide (BL) treatment (PubMed:12427998). Induced rapidly and transiently in seedlings hooks but fades out of hypocotyls after exposure to light (PubMed:32333772).</text>
</comment>
<comment type="disruption phenotype">
    <text evidence="7">No obvious morphological alteration during vegetative or floral development, but semi-sterile phenotype with several female gametophytes arrested before the first nuclear mitotic division of the haploid functional megaspore.</text>
</comment>
<comment type="similarity">
    <text evidence="12">Belongs to the cytochrome P450 family.</text>
</comment>
<evidence type="ECO:0000250" key="1">
    <source>
        <dbReference type="UniProtKB" id="P04798"/>
    </source>
</evidence>
<evidence type="ECO:0000255" key="2"/>
<evidence type="ECO:0000269" key="3">
    <source>
    </source>
</evidence>
<evidence type="ECO:0000269" key="4">
    <source>
    </source>
</evidence>
<evidence type="ECO:0000269" key="5">
    <source>
    </source>
</evidence>
<evidence type="ECO:0000269" key="6">
    <source>
    </source>
</evidence>
<evidence type="ECO:0000269" key="7">
    <source>
    </source>
</evidence>
<evidence type="ECO:0000269" key="8">
    <source>
    </source>
</evidence>
<evidence type="ECO:0000303" key="9">
    <source>
    </source>
</evidence>
<evidence type="ECO:0000303" key="10">
    <source>
    </source>
</evidence>
<evidence type="ECO:0000303" key="11">
    <source>
    </source>
</evidence>
<evidence type="ECO:0000305" key="12"/>
<evidence type="ECO:0000312" key="13">
    <source>
        <dbReference type="Araport" id="AT5G38970"/>
    </source>
</evidence>
<evidence type="ECO:0000312" key="14">
    <source>
        <dbReference type="EMBL" id="BAB08653.1"/>
    </source>
</evidence>
<organism>
    <name type="scientific">Arabidopsis thaliana</name>
    <name type="common">Mouse-ear cress</name>
    <dbReference type="NCBI Taxonomy" id="3702"/>
    <lineage>
        <taxon>Eukaryota</taxon>
        <taxon>Viridiplantae</taxon>
        <taxon>Streptophyta</taxon>
        <taxon>Embryophyta</taxon>
        <taxon>Tracheophyta</taxon>
        <taxon>Spermatophyta</taxon>
        <taxon>Magnoliopsida</taxon>
        <taxon>eudicotyledons</taxon>
        <taxon>Gunneridae</taxon>
        <taxon>Pentapetalae</taxon>
        <taxon>rosids</taxon>
        <taxon>malvids</taxon>
        <taxon>Brassicales</taxon>
        <taxon>Brassicaceae</taxon>
        <taxon>Camelineae</taxon>
        <taxon>Arabidopsis</taxon>
    </lineage>
</organism>
<gene>
    <name evidence="10" type="primary">CYP85A1</name>
    <name evidence="11" type="synonym">BR6OX1</name>
    <name evidence="13" type="ordered locus">At5g38970</name>
    <name evidence="14" type="ORF">K15E6.150</name>
</gene>
<protein>
    <recommendedName>
        <fullName evidence="10">Cytochrome P450 85A1</fullName>
        <shortName evidence="10">AtCYP85A1</shortName>
    </recommendedName>
    <alternativeName>
        <fullName evidence="9">3-dehydroteasterone synthase</fullName>
        <ecNumber evidence="3">1.14.14.179</ecNumber>
    </alternativeName>
    <alternativeName>
        <fullName evidence="11">Brassinosteroid-6-oxidase 1</fullName>
        <shortName evidence="11">BR6ox 1</shortName>
    </alternativeName>
    <alternativeName>
        <fullName evidence="11">C6-oxidase 1</fullName>
    </alternativeName>
    <alternativeName>
        <fullName evidence="9">Castasterone synthase</fullName>
        <ecNumber evidence="3 6">1.14.14.179</ecNumber>
    </alternativeName>
    <alternativeName>
        <fullName evidence="9">Teasterone synthase</fullName>
        <ecNumber evidence="3">1.14.14.179</ecNumber>
    </alternativeName>
    <alternativeName>
        <fullName evidence="9">Typhasterol synthase</fullName>
        <ecNumber evidence="3">1.14.14.179</ecNumber>
    </alternativeName>
</protein>
<accession>Q9FMA5</accession>
<keyword id="KW-0025">Alternative splicing</keyword>
<keyword id="KW-1069">Brassinosteroid biosynthesis</keyword>
<keyword id="KW-0349">Heme</keyword>
<keyword id="KW-0408">Iron</keyword>
<keyword id="KW-0444">Lipid biosynthesis</keyword>
<keyword id="KW-0443">Lipid metabolism</keyword>
<keyword id="KW-0472">Membrane</keyword>
<keyword id="KW-0479">Metal-binding</keyword>
<keyword id="KW-0503">Monooxygenase</keyword>
<keyword id="KW-0560">Oxidoreductase</keyword>
<keyword id="KW-1185">Reference proteome</keyword>
<keyword id="KW-0752">Steroid biosynthesis</keyword>
<keyword id="KW-0812">Transmembrane</keyword>
<keyword id="KW-1133">Transmembrane helix</keyword>
<name>C85A1_ARATH</name>